<sequence length="368" mass="41629">MRAEIENYVKKIEQSLELLWRSLDVESSTERLNELEELTSDPSLWNDQANAQTLLREKSNLEEKLNAFNKLKSNLKDTLELEEMAEAENDLETLSQIEQDLKNLSVIAAKFETECLFSGEADGNNCFLEINAGAGGTESHDWVSIMMRMYLRFAERLGFKTEIINMINGEEAGIKSCTIRIIGKRAYGWFKTEAGVHRLVRISPFNAAGKRMTSFASSWVYPEIDDNIAITIEDKDLRIDTFRASGAGGQHVNTTDSAVRITHIPTNTVTQCQSDRSQHKNKAQAMKMLQAKLYELEMQKRTDSVNEQNAAKTDNSWGHQIRSYVLQPYQMVKDLRTDYETSDTKGVLDGDLEDFVSASLAMNAGGRR</sequence>
<proteinExistence type="inferred from homology"/>
<dbReference type="EMBL" id="CP000053">
    <property type="protein sequence ID" value="AAY61852.1"/>
    <property type="molecule type" value="Genomic_DNA"/>
</dbReference>
<dbReference type="SMR" id="Q4UKS1"/>
<dbReference type="STRING" id="315456.RF_1001"/>
<dbReference type="KEGG" id="rfe:RF_1001"/>
<dbReference type="eggNOG" id="COG1186">
    <property type="taxonomic scope" value="Bacteria"/>
</dbReference>
<dbReference type="HOGENOM" id="CLU_221951_1_0_5"/>
<dbReference type="OrthoDB" id="9806673at2"/>
<dbReference type="Proteomes" id="UP000008548">
    <property type="component" value="Chromosome"/>
</dbReference>
<dbReference type="GO" id="GO:0005737">
    <property type="term" value="C:cytoplasm"/>
    <property type="evidence" value="ECO:0007669"/>
    <property type="project" value="UniProtKB-SubCell"/>
</dbReference>
<dbReference type="GO" id="GO:0016149">
    <property type="term" value="F:translation release factor activity, codon specific"/>
    <property type="evidence" value="ECO:0007669"/>
    <property type="project" value="UniProtKB-UniRule"/>
</dbReference>
<dbReference type="FunFam" id="3.30.160.20:FF:000010">
    <property type="entry name" value="Peptide chain release factor 2"/>
    <property type="match status" value="1"/>
</dbReference>
<dbReference type="Gene3D" id="3.30.160.20">
    <property type="match status" value="1"/>
</dbReference>
<dbReference type="Gene3D" id="3.30.70.1660">
    <property type="match status" value="1"/>
</dbReference>
<dbReference type="Gene3D" id="1.20.58.410">
    <property type="entry name" value="Release factor"/>
    <property type="match status" value="1"/>
</dbReference>
<dbReference type="HAMAP" id="MF_00094">
    <property type="entry name" value="Rel_fac_2"/>
    <property type="match status" value="1"/>
</dbReference>
<dbReference type="InterPro" id="IPR005139">
    <property type="entry name" value="PCRF"/>
</dbReference>
<dbReference type="InterPro" id="IPR000352">
    <property type="entry name" value="Pep_chain_release_fac_I"/>
</dbReference>
<dbReference type="InterPro" id="IPR045853">
    <property type="entry name" value="Pep_chain_release_fac_I_sf"/>
</dbReference>
<dbReference type="InterPro" id="IPR004374">
    <property type="entry name" value="PrfB"/>
</dbReference>
<dbReference type="NCBIfam" id="TIGR00020">
    <property type="entry name" value="prfB"/>
    <property type="match status" value="1"/>
</dbReference>
<dbReference type="PANTHER" id="PTHR43116:SF3">
    <property type="entry name" value="CLASS I PEPTIDE CHAIN RELEASE FACTOR"/>
    <property type="match status" value="1"/>
</dbReference>
<dbReference type="PANTHER" id="PTHR43116">
    <property type="entry name" value="PEPTIDE CHAIN RELEASE FACTOR 2"/>
    <property type="match status" value="1"/>
</dbReference>
<dbReference type="Pfam" id="PF03462">
    <property type="entry name" value="PCRF"/>
    <property type="match status" value="1"/>
</dbReference>
<dbReference type="Pfam" id="PF00472">
    <property type="entry name" value="RF-1"/>
    <property type="match status" value="1"/>
</dbReference>
<dbReference type="SMART" id="SM00937">
    <property type="entry name" value="PCRF"/>
    <property type="match status" value="1"/>
</dbReference>
<dbReference type="SUPFAM" id="SSF75620">
    <property type="entry name" value="Release factor"/>
    <property type="match status" value="1"/>
</dbReference>
<dbReference type="PROSITE" id="PS00745">
    <property type="entry name" value="RF_PROK_I"/>
    <property type="match status" value="1"/>
</dbReference>
<accession>Q4UKS1</accession>
<name>RF2_RICFE</name>
<feature type="chain" id="PRO_0000166839" description="Peptide chain release factor 2">
    <location>
        <begin position="1"/>
        <end position="368"/>
    </location>
</feature>
<feature type="modified residue" description="N5-methylglutamine" evidence="1">
    <location>
        <position position="250"/>
    </location>
</feature>
<reference key="1">
    <citation type="journal article" date="2005" name="PLoS Biol.">
        <title>The genome sequence of Rickettsia felis identifies the first putative conjugative plasmid in an obligate intracellular parasite.</title>
        <authorList>
            <person name="Ogata H."/>
            <person name="Renesto P."/>
            <person name="Audic S."/>
            <person name="Robert C."/>
            <person name="Blanc G."/>
            <person name="Fournier P.-E."/>
            <person name="Parinello H."/>
            <person name="Claverie J.-M."/>
            <person name="Raoult D."/>
        </authorList>
    </citation>
    <scope>NUCLEOTIDE SEQUENCE [LARGE SCALE GENOMIC DNA]</scope>
    <source>
        <strain>ATCC VR-1525 / URRWXCal2</strain>
    </source>
</reference>
<protein>
    <recommendedName>
        <fullName evidence="1">Peptide chain release factor 2</fullName>
        <shortName evidence="1">RF-2</shortName>
    </recommendedName>
</protein>
<comment type="function">
    <text evidence="1">Peptide chain release factor 2 directs the termination of translation in response to the peptide chain termination codons UGA and UAA.</text>
</comment>
<comment type="subcellular location">
    <subcellularLocation>
        <location evidence="1">Cytoplasm</location>
    </subcellularLocation>
</comment>
<comment type="PTM">
    <text evidence="1">Methylated by PrmC. Methylation increases the termination efficiency of RF2.</text>
</comment>
<comment type="similarity">
    <text evidence="1">Belongs to the prokaryotic/mitochondrial release factor family.</text>
</comment>
<keyword id="KW-0963">Cytoplasm</keyword>
<keyword id="KW-0488">Methylation</keyword>
<keyword id="KW-0648">Protein biosynthesis</keyword>
<organism>
    <name type="scientific">Rickettsia felis (strain ATCC VR-1525 / URRWXCal2)</name>
    <name type="common">Rickettsia azadi</name>
    <dbReference type="NCBI Taxonomy" id="315456"/>
    <lineage>
        <taxon>Bacteria</taxon>
        <taxon>Pseudomonadati</taxon>
        <taxon>Pseudomonadota</taxon>
        <taxon>Alphaproteobacteria</taxon>
        <taxon>Rickettsiales</taxon>
        <taxon>Rickettsiaceae</taxon>
        <taxon>Rickettsieae</taxon>
        <taxon>Rickettsia</taxon>
        <taxon>spotted fever group</taxon>
    </lineage>
</organism>
<gene>
    <name evidence="1" type="primary">prfB</name>
    <name type="ordered locus">RF_1001</name>
</gene>
<evidence type="ECO:0000255" key="1">
    <source>
        <dbReference type="HAMAP-Rule" id="MF_00094"/>
    </source>
</evidence>